<feature type="chain" id="PRO_1000023452" description="3-dehydroquinate dehydratase">
    <location>
        <begin position="1"/>
        <end position="158"/>
    </location>
</feature>
<feature type="active site" description="Proton acceptor" evidence="1">
    <location>
        <position position="24"/>
    </location>
</feature>
<feature type="active site" description="Proton donor" evidence="1">
    <location>
        <position position="101"/>
    </location>
</feature>
<feature type="binding site" evidence="1">
    <location>
        <position position="75"/>
    </location>
    <ligand>
        <name>substrate</name>
    </ligand>
</feature>
<feature type="binding site" evidence="1">
    <location>
        <position position="81"/>
    </location>
    <ligand>
        <name>substrate</name>
    </ligand>
</feature>
<feature type="binding site" evidence="1">
    <location>
        <position position="88"/>
    </location>
    <ligand>
        <name>substrate</name>
    </ligand>
</feature>
<feature type="binding site" evidence="1">
    <location>
        <begin position="102"/>
        <end position="103"/>
    </location>
    <ligand>
        <name>substrate</name>
    </ligand>
</feature>
<feature type="binding site" evidence="1">
    <location>
        <position position="112"/>
    </location>
    <ligand>
        <name>substrate</name>
    </ligand>
</feature>
<feature type="site" description="Transition state stabilizer" evidence="1">
    <location>
        <position position="19"/>
    </location>
</feature>
<gene>
    <name evidence="1" type="primary">aroQ</name>
    <name type="ordered locus">BARBAKC583_1276</name>
</gene>
<organism>
    <name type="scientific">Bartonella bacilliformis (strain ATCC 35685 / KC583 / Herrer 020/F12,63)</name>
    <dbReference type="NCBI Taxonomy" id="360095"/>
    <lineage>
        <taxon>Bacteria</taxon>
        <taxon>Pseudomonadati</taxon>
        <taxon>Pseudomonadota</taxon>
        <taxon>Alphaproteobacteria</taxon>
        <taxon>Hyphomicrobiales</taxon>
        <taxon>Bartonellaceae</taxon>
        <taxon>Bartonella</taxon>
    </lineage>
</organism>
<proteinExistence type="inferred from homology"/>
<accession>A1UU72</accession>
<dbReference type="EC" id="4.2.1.10" evidence="1"/>
<dbReference type="EMBL" id="CP000524">
    <property type="protein sequence ID" value="ABM44493.1"/>
    <property type="molecule type" value="Genomic_DNA"/>
</dbReference>
<dbReference type="RefSeq" id="WP_005768027.1">
    <property type="nucleotide sequence ID" value="NC_008783.1"/>
</dbReference>
<dbReference type="SMR" id="A1UU72"/>
<dbReference type="STRING" id="360095.BARBAKC583_1276"/>
<dbReference type="GeneID" id="4684272"/>
<dbReference type="KEGG" id="bbk:BARBAKC583_1276"/>
<dbReference type="PATRIC" id="fig|360095.6.peg.1252"/>
<dbReference type="eggNOG" id="COG0757">
    <property type="taxonomic scope" value="Bacteria"/>
</dbReference>
<dbReference type="HOGENOM" id="CLU_090968_2_0_5"/>
<dbReference type="OrthoDB" id="9790793at2"/>
<dbReference type="UniPathway" id="UPA00053">
    <property type="reaction ID" value="UER00086"/>
</dbReference>
<dbReference type="Proteomes" id="UP000000643">
    <property type="component" value="Chromosome"/>
</dbReference>
<dbReference type="GO" id="GO:0003855">
    <property type="term" value="F:3-dehydroquinate dehydratase activity"/>
    <property type="evidence" value="ECO:0007669"/>
    <property type="project" value="UniProtKB-UniRule"/>
</dbReference>
<dbReference type="GO" id="GO:0008652">
    <property type="term" value="P:amino acid biosynthetic process"/>
    <property type="evidence" value="ECO:0007669"/>
    <property type="project" value="UniProtKB-KW"/>
</dbReference>
<dbReference type="GO" id="GO:0009073">
    <property type="term" value="P:aromatic amino acid family biosynthetic process"/>
    <property type="evidence" value="ECO:0007669"/>
    <property type="project" value="UniProtKB-KW"/>
</dbReference>
<dbReference type="GO" id="GO:0009423">
    <property type="term" value="P:chorismate biosynthetic process"/>
    <property type="evidence" value="ECO:0007669"/>
    <property type="project" value="UniProtKB-UniRule"/>
</dbReference>
<dbReference type="GO" id="GO:0019631">
    <property type="term" value="P:quinate catabolic process"/>
    <property type="evidence" value="ECO:0007669"/>
    <property type="project" value="TreeGrafter"/>
</dbReference>
<dbReference type="CDD" id="cd00466">
    <property type="entry name" value="DHQase_II"/>
    <property type="match status" value="1"/>
</dbReference>
<dbReference type="Gene3D" id="3.40.50.9100">
    <property type="entry name" value="Dehydroquinase, class II"/>
    <property type="match status" value="1"/>
</dbReference>
<dbReference type="HAMAP" id="MF_00169">
    <property type="entry name" value="AroQ"/>
    <property type="match status" value="1"/>
</dbReference>
<dbReference type="InterPro" id="IPR001874">
    <property type="entry name" value="DHquinase_II"/>
</dbReference>
<dbReference type="InterPro" id="IPR018509">
    <property type="entry name" value="DHquinase_II_CS"/>
</dbReference>
<dbReference type="InterPro" id="IPR036441">
    <property type="entry name" value="DHquinase_II_sf"/>
</dbReference>
<dbReference type="NCBIfam" id="TIGR01088">
    <property type="entry name" value="aroQ"/>
    <property type="match status" value="1"/>
</dbReference>
<dbReference type="NCBIfam" id="NF003805">
    <property type="entry name" value="PRK05395.1-2"/>
    <property type="match status" value="1"/>
</dbReference>
<dbReference type="NCBIfam" id="NF003806">
    <property type="entry name" value="PRK05395.1-3"/>
    <property type="match status" value="1"/>
</dbReference>
<dbReference type="NCBIfam" id="NF003807">
    <property type="entry name" value="PRK05395.1-4"/>
    <property type="match status" value="1"/>
</dbReference>
<dbReference type="PANTHER" id="PTHR21272">
    <property type="entry name" value="CATABOLIC 3-DEHYDROQUINASE"/>
    <property type="match status" value="1"/>
</dbReference>
<dbReference type="PANTHER" id="PTHR21272:SF3">
    <property type="entry name" value="CATABOLIC 3-DEHYDROQUINASE"/>
    <property type="match status" value="1"/>
</dbReference>
<dbReference type="Pfam" id="PF01220">
    <property type="entry name" value="DHquinase_II"/>
    <property type="match status" value="1"/>
</dbReference>
<dbReference type="PIRSF" id="PIRSF001399">
    <property type="entry name" value="DHquinase_II"/>
    <property type="match status" value="1"/>
</dbReference>
<dbReference type="SUPFAM" id="SSF52304">
    <property type="entry name" value="Type II 3-dehydroquinate dehydratase"/>
    <property type="match status" value="1"/>
</dbReference>
<dbReference type="PROSITE" id="PS01029">
    <property type="entry name" value="DEHYDROQUINASE_II"/>
    <property type="match status" value="1"/>
</dbReference>
<reference key="1">
    <citation type="submission" date="2006-12" db="EMBL/GenBank/DDBJ databases">
        <authorList>
            <person name="Hendrix L."/>
            <person name="Mohamoud Y."/>
            <person name="Radune D."/>
            <person name="Shvartsbeyn A."/>
            <person name="Daugherty S."/>
            <person name="Dodson R."/>
            <person name="Durkin A.S."/>
            <person name="Harkins D."/>
            <person name="Huot H."/>
            <person name="Kothari S.P."/>
            <person name="Madupu R."/>
            <person name="Li J."/>
            <person name="Nelson W.C."/>
            <person name="Shrivastava S."/>
            <person name="Giglio M.G."/>
            <person name="Haft D."/>
            <person name="Selengut J."/>
            <person name="Fraser-Ligget C."/>
            <person name="Seshadri R."/>
        </authorList>
    </citation>
    <scope>NUCLEOTIDE SEQUENCE [LARGE SCALE GENOMIC DNA]</scope>
    <source>
        <strain>ATCC 35685 / KC583 / Herrer 020/F12,63</strain>
    </source>
</reference>
<evidence type="ECO:0000255" key="1">
    <source>
        <dbReference type="HAMAP-Rule" id="MF_00169"/>
    </source>
</evidence>
<protein>
    <recommendedName>
        <fullName evidence="1">3-dehydroquinate dehydratase</fullName>
        <shortName evidence="1">3-dehydroquinase</shortName>
        <ecNumber evidence="1">4.2.1.10</ecNumber>
    </recommendedName>
    <alternativeName>
        <fullName evidence="1">Type II DHQase</fullName>
    </alternativeName>
</protein>
<name>AROQ_BARBK</name>
<keyword id="KW-0028">Amino-acid biosynthesis</keyword>
<keyword id="KW-0057">Aromatic amino acid biosynthesis</keyword>
<keyword id="KW-0456">Lyase</keyword>
<sequence>MSTVITILNGPNLNFLGKREPEVYGTETLEYIEKSCQDYAKKLEFMVQCHQTNCEGQLVEWIQEAIGMSAGLIINPAAYGHTSIAIFDALKMFSGPIVEVHLSNIHRREAFRHHSYVSASADAVIVGCGHEGYLFALEYIAKQLRYGYKKRSNQTLLT</sequence>
<comment type="function">
    <text evidence="1">Catalyzes a trans-dehydration via an enolate intermediate.</text>
</comment>
<comment type="catalytic activity">
    <reaction evidence="1">
        <text>3-dehydroquinate = 3-dehydroshikimate + H2O</text>
        <dbReference type="Rhea" id="RHEA:21096"/>
        <dbReference type="ChEBI" id="CHEBI:15377"/>
        <dbReference type="ChEBI" id="CHEBI:16630"/>
        <dbReference type="ChEBI" id="CHEBI:32364"/>
        <dbReference type="EC" id="4.2.1.10"/>
    </reaction>
</comment>
<comment type="pathway">
    <text evidence="1">Metabolic intermediate biosynthesis; chorismate biosynthesis; chorismate from D-erythrose 4-phosphate and phosphoenolpyruvate: step 3/7.</text>
</comment>
<comment type="subunit">
    <text evidence="1">Homododecamer.</text>
</comment>
<comment type="similarity">
    <text evidence="1">Belongs to the type-II 3-dehydroquinase family.</text>
</comment>